<accession>Q89AJ0</accession>
<organism>
    <name type="scientific">Buchnera aphidicola subsp. Baizongia pistaciae (strain Bp)</name>
    <dbReference type="NCBI Taxonomy" id="224915"/>
    <lineage>
        <taxon>Bacteria</taxon>
        <taxon>Pseudomonadati</taxon>
        <taxon>Pseudomonadota</taxon>
        <taxon>Gammaproteobacteria</taxon>
        <taxon>Enterobacterales</taxon>
        <taxon>Erwiniaceae</taxon>
        <taxon>Buchnera</taxon>
    </lineage>
</organism>
<dbReference type="EC" id="7.2.2.20" evidence="1"/>
<dbReference type="EMBL" id="AE016826">
    <property type="protein sequence ID" value="AAO27020.1"/>
    <property type="molecule type" value="Genomic_DNA"/>
</dbReference>
<dbReference type="RefSeq" id="WP_011091421.1">
    <property type="nucleotide sequence ID" value="NC_004545.1"/>
</dbReference>
<dbReference type="SMR" id="Q89AJ0"/>
<dbReference type="STRING" id="224915.bbp_295"/>
<dbReference type="KEGG" id="bab:bbp_295"/>
<dbReference type="eggNOG" id="COG1121">
    <property type="taxonomic scope" value="Bacteria"/>
</dbReference>
<dbReference type="HOGENOM" id="CLU_000604_1_11_6"/>
<dbReference type="OrthoDB" id="9780942at2"/>
<dbReference type="Proteomes" id="UP000000601">
    <property type="component" value="Chromosome"/>
</dbReference>
<dbReference type="GO" id="GO:0005886">
    <property type="term" value="C:plasma membrane"/>
    <property type="evidence" value="ECO:0007669"/>
    <property type="project" value="UniProtKB-SubCell"/>
</dbReference>
<dbReference type="GO" id="GO:0015633">
    <property type="term" value="F:ABC-type zinc transporter activity"/>
    <property type="evidence" value="ECO:0007669"/>
    <property type="project" value="UniProtKB-EC"/>
</dbReference>
<dbReference type="GO" id="GO:0005524">
    <property type="term" value="F:ATP binding"/>
    <property type="evidence" value="ECO:0007669"/>
    <property type="project" value="UniProtKB-KW"/>
</dbReference>
<dbReference type="GO" id="GO:0016887">
    <property type="term" value="F:ATP hydrolysis activity"/>
    <property type="evidence" value="ECO:0007669"/>
    <property type="project" value="InterPro"/>
</dbReference>
<dbReference type="GO" id="GO:0010043">
    <property type="term" value="P:response to zinc ion"/>
    <property type="evidence" value="ECO:0007669"/>
    <property type="project" value="TreeGrafter"/>
</dbReference>
<dbReference type="FunFam" id="3.40.50.300:FF:000392">
    <property type="entry name" value="Zinc import ATP-binding protein ZnuC"/>
    <property type="match status" value="1"/>
</dbReference>
<dbReference type="Gene3D" id="3.40.50.300">
    <property type="entry name" value="P-loop containing nucleotide triphosphate hydrolases"/>
    <property type="match status" value="1"/>
</dbReference>
<dbReference type="InterPro" id="IPR003593">
    <property type="entry name" value="AAA+_ATPase"/>
</dbReference>
<dbReference type="InterPro" id="IPR003439">
    <property type="entry name" value="ABC_transporter-like_ATP-bd"/>
</dbReference>
<dbReference type="InterPro" id="IPR017871">
    <property type="entry name" value="ABC_transporter-like_CS"/>
</dbReference>
<dbReference type="InterPro" id="IPR050153">
    <property type="entry name" value="Metal_Ion_Import_ABC"/>
</dbReference>
<dbReference type="InterPro" id="IPR027417">
    <property type="entry name" value="P-loop_NTPase"/>
</dbReference>
<dbReference type="NCBIfam" id="NF007090">
    <property type="entry name" value="PRK09544.1"/>
    <property type="match status" value="1"/>
</dbReference>
<dbReference type="PANTHER" id="PTHR42734">
    <property type="entry name" value="METAL TRANSPORT SYSTEM ATP-BINDING PROTEIN TM_0124-RELATED"/>
    <property type="match status" value="1"/>
</dbReference>
<dbReference type="PANTHER" id="PTHR42734:SF9">
    <property type="entry name" value="ZINC IMPORT ATP-BINDING PROTEIN ZNUC"/>
    <property type="match status" value="1"/>
</dbReference>
<dbReference type="Pfam" id="PF00005">
    <property type="entry name" value="ABC_tran"/>
    <property type="match status" value="1"/>
</dbReference>
<dbReference type="SMART" id="SM00382">
    <property type="entry name" value="AAA"/>
    <property type="match status" value="1"/>
</dbReference>
<dbReference type="SUPFAM" id="SSF52540">
    <property type="entry name" value="P-loop containing nucleoside triphosphate hydrolases"/>
    <property type="match status" value="1"/>
</dbReference>
<dbReference type="PROSITE" id="PS00211">
    <property type="entry name" value="ABC_TRANSPORTER_1"/>
    <property type="match status" value="1"/>
</dbReference>
<dbReference type="PROSITE" id="PS50893">
    <property type="entry name" value="ABC_TRANSPORTER_2"/>
    <property type="match status" value="1"/>
</dbReference>
<dbReference type="PROSITE" id="PS51298">
    <property type="entry name" value="ZNUC"/>
    <property type="match status" value="1"/>
</dbReference>
<feature type="chain" id="PRO_0000093129" description="Zinc import ATP-binding protein ZnuC">
    <location>
        <begin position="1"/>
        <end position="238"/>
    </location>
</feature>
<feature type="domain" description="ABC transporter" evidence="1">
    <location>
        <begin position="5"/>
        <end position="220"/>
    </location>
</feature>
<feature type="binding site" evidence="1">
    <location>
        <begin position="37"/>
        <end position="44"/>
    </location>
    <ligand>
        <name>ATP</name>
        <dbReference type="ChEBI" id="CHEBI:30616"/>
    </ligand>
</feature>
<sequence>MSIFIQLNNISVNFNNRSILSNISLALTPNCILTLIGPNGAGKSTLVRVILGLLKPNQGKIFFKNNLRIGYIPQKLNLHSTLPITVNRFMNLSYFNDKNYIQGMLSRINIIHLKHHPLQKLSGGEMQKVLLARALLKKPELLVLDEPTQGIDIIGKIAFYKLVNQIKNELKCSILMVSHDLSIVMANTDKVICLNNHICCSGPPETISKNSEFIAIFGNIGKNYLALYRHRHNHHHDF</sequence>
<gene>
    <name evidence="1" type="primary">znuC</name>
    <name type="ordered locus">bbp_295</name>
</gene>
<name>ZNUC_BUCBP</name>
<keyword id="KW-0067">ATP-binding</keyword>
<keyword id="KW-1003">Cell membrane</keyword>
<keyword id="KW-0406">Ion transport</keyword>
<keyword id="KW-0472">Membrane</keyword>
<keyword id="KW-0547">Nucleotide-binding</keyword>
<keyword id="KW-1185">Reference proteome</keyword>
<keyword id="KW-1278">Translocase</keyword>
<keyword id="KW-0813">Transport</keyword>
<keyword id="KW-0862">Zinc</keyword>
<keyword id="KW-0864">Zinc transport</keyword>
<protein>
    <recommendedName>
        <fullName evidence="1">Zinc import ATP-binding protein ZnuC</fullName>
        <ecNumber evidence="1">7.2.2.20</ecNumber>
    </recommendedName>
</protein>
<comment type="function">
    <text evidence="1">Part of the ABC transporter complex ZnuABC involved in zinc import. Responsible for energy coupling to the transport system.</text>
</comment>
<comment type="catalytic activity">
    <reaction evidence="1">
        <text>Zn(2+)(out) + ATP(in) + H2O(in) = Zn(2+)(in) + ADP(in) + phosphate(in) + H(+)(in)</text>
        <dbReference type="Rhea" id="RHEA:29795"/>
        <dbReference type="ChEBI" id="CHEBI:15377"/>
        <dbReference type="ChEBI" id="CHEBI:15378"/>
        <dbReference type="ChEBI" id="CHEBI:29105"/>
        <dbReference type="ChEBI" id="CHEBI:30616"/>
        <dbReference type="ChEBI" id="CHEBI:43474"/>
        <dbReference type="ChEBI" id="CHEBI:456216"/>
        <dbReference type="EC" id="7.2.2.20"/>
    </reaction>
</comment>
<comment type="subunit">
    <text evidence="1">The complex is composed of two ATP-binding proteins (ZnuC), two transmembrane proteins (ZnuB) and a solute-binding protein (ZnuA).</text>
</comment>
<comment type="subcellular location">
    <subcellularLocation>
        <location evidence="1">Cell membrane</location>
        <topology evidence="1">Peripheral membrane protein</topology>
    </subcellularLocation>
</comment>
<comment type="similarity">
    <text evidence="1">Belongs to the ABC transporter superfamily. Zinc importer (TC 3.A.1.15.5) family.</text>
</comment>
<reference key="1">
    <citation type="journal article" date="2003" name="Proc. Natl. Acad. Sci. U.S.A.">
        <title>Reductive genome evolution in Buchnera aphidicola.</title>
        <authorList>
            <person name="van Ham R.C.H.J."/>
            <person name="Kamerbeek J."/>
            <person name="Palacios C."/>
            <person name="Rausell C."/>
            <person name="Abascal F."/>
            <person name="Bastolla U."/>
            <person name="Fernandez J.M."/>
            <person name="Jimenez L."/>
            <person name="Postigo M."/>
            <person name="Silva F.J."/>
            <person name="Tamames J."/>
            <person name="Viguera E."/>
            <person name="Latorre A."/>
            <person name="Valencia A."/>
            <person name="Moran F."/>
            <person name="Moya A."/>
        </authorList>
    </citation>
    <scope>NUCLEOTIDE SEQUENCE [LARGE SCALE GENOMIC DNA]</scope>
    <source>
        <strain>Bp</strain>
    </source>
</reference>
<evidence type="ECO:0000255" key="1">
    <source>
        <dbReference type="HAMAP-Rule" id="MF_01725"/>
    </source>
</evidence>
<proteinExistence type="inferred from homology"/>